<feature type="chain" id="PRO_0000111405" description="Small ribosomal subunit protein uS9">
    <location>
        <begin position="1"/>
        <end position="130"/>
    </location>
</feature>
<feature type="region of interest" description="Disordered" evidence="2">
    <location>
        <begin position="99"/>
        <end position="130"/>
    </location>
</feature>
<feature type="compositionally biased region" description="Basic residues" evidence="2">
    <location>
        <begin position="111"/>
        <end position="130"/>
    </location>
</feature>
<evidence type="ECO:0000255" key="1">
    <source>
        <dbReference type="HAMAP-Rule" id="MF_00532"/>
    </source>
</evidence>
<evidence type="ECO:0000256" key="2">
    <source>
        <dbReference type="SAM" id="MobiDB-lite"/>
    </source>
</evidence>
<evidence type="ECO:0000305" key="3"/>
<accession>P66645</accession>
<accession>Q99S52</accession>
<keyword id="KW-0687">Ribonucleoprotein</keyword>
<keyword id="KW-0689">Ribosomal protein</keyword>
<reference key="1">
    <citation type="journal article" date="2001" name="Lancet">
        <title>Whole genome sequencing of meticillin-resistant Staphylococcus aureus.</title>
        <authorList>
            <person name="Kuroda M."/>
            <person name="Ohta T."/>
            <person name="Uchiyama I."/>
            <person name="Baba T."/>
            <person name="Yuzawa H."/>
            <person name="Kobayashi I."/>
            <person name="Cui L."/>
            <person name="Oguchi A."/>
            <person name="Aoki K."/>
            <person name="Nagai Y."/>
            <person name="Lian J.-Q."/>
            <person name="Ito T."/>
            <person name="Kanamori M."/>
            <person name="Matsumaru H."/>
            <person name="Maruyama A."/>
            <person name="Murakami H."/>
            <person name="Hosoyama A."/>
            <person name="Mizutani-Ui Y."/>
            <person name="Takahashi N.K."/>
            <person name="Sawano T."/>
            <person name="Inoue R."/>
            <person name="Kaito C."/>
            <person name="Sekimizu K."/>
            <person name="Hirakawa H."/>
            <person name="Kuhara S."/>
            <person name="Goto S."/>
            <person name="Yabuzaki J."/>
            <person name="Kanehisa M."/>
            <person name="Yamashita A."/>
            <person name="Oshima K."/>
            <person name="Furuya K."/>
            <person name="Yoshino C."/>
            <person name="Shiba T."/>
            <person name="Hattori M."/>
            <person name="Ogasawara N."/>
            <person name="Hayashi H."/>
            <person name="Hiramatsu K."/>
        </authorList>
    </citation>
    <scope>NUCLEOTIDE SEQUENCE [LARGE SCALE GENOMIC DNA]</scope>
    <source>
        <strain>Mu50 / ATCC 700699</strain>
    </source>
</reference>
<organism>
    <name type="scientific">Staphylococcus aureus (strain Mu50 / ATCC 700699)</name>
    <dbReference type="NCBI Taxonomy" id="158878"/>
    <lineage>
        <taxon>Bacteria</taxon>
        <taxon>Bacillati</taxon>
        <taxon>Bacillota</taxon>
        <taxon>Bacilli</taxon>
        <taxon>Bacillales</taxon>
        <taxon>Staphylococcaceae</taxon>
        <taxon>Staphylococcus</taxon>
    </lineage>
</organism>
<sequence>MAQVEYRGTGRRKNSVARVRLVPGEGNITVNNRDVREYLPFESLILDLNQPFDVTETKGNYDVLVNVHGGGFTGQAQAIRHGIARALLEADPEYRGSLKRAGLLTRDPRMKERKKPGLKAARRSPQFSKR</sequence>
<proteinExistence type="inferred from homology"/>
<comment type="similarity">
    <text evidence="1">Belongs to the universal ribosomal protein uS9 family.</text>
</comment>
<protein>
    <recommendedName>
        <fullName evidence="1">Small ribosomal subunit protein uS9</fullName>
    </recommendedName>
    <alternativeName>
        <fullName evidence="3">30S ribosomal protein S9</fullName>
    </alternativeName>
</protein>
<dbReference type="EMBL" id="BA000017">
    <property type="protein sequence ID" value="BAB58379.1"/>
    <property type="molecule type" value="Genomic_DNA"/>
</dbReference>
<dbReference type="RefSeq" id="WP_001790547.1">
    <property type="nucleotide sequence ID" value="NC_002758.2"/>
</dbReference>
<dbReference type="SMR" id="P66645"/>
<dbReference type="GeneID" id="98346529"/>
<dbReference type="KEGG" id="sav:SAV2217"/>
<dbReference type="HOGENOM" id="CLU_046483_2_1_9"/>
<dbReference type="PhylomeDB" id="P66645"/>
<dbReference type="Proteomes" id="UP000002481">
    <property type="component" value="Chromosome"/>
</dbReference>
<dbReference type="GO" id="GO:0022627">
    <property type="term" value="C:cytosolic small ribosomal subunit"/>
    <property type="evidence" value="ECO:0007669"/>
    <property type="project" value="TreeGrafter"/>
</dbReference>
<dbReference type="GO" id="GO:0003723">
    <property type="term" value="F:RNA binding"/>
    <property type="evidence" value="ECO:0007669"/>
    <property type="project" value="TreeGrafter"/>
</dbReference>
<dbReference type="GO" id="GO:0003735">
    <property type="term" value="F:structural constituent of ribosome"/>
    <property type="evidence" value="ECO:0007669"/>
    <property type="project" value="InterPro"/>
</dbReference>
<dbReference type="GO" id="GO:0006412">
    <property type="term" value="P:translation"/>
    <property type="evidence" value="ECO:0007669"/>
    <property type="project" value="UniProtKB-UniRule"/>
</dbReference>
<dbReference type="FunFam" id="3.30.230.10:FF:000001">
    <property type="entry name" value="30S ribosomal protein S9"/>
    <property type="match status" value="1"/>
</dbReference>
<dbReference type="Gene3D" id="3.30.230.10">
    <property type="match status" value="1"/>
</dbReference>
<dbReference type="HAMAP" id="MF_00532_B">
    <property type="entry name" value="Ribosomal_uS9_B"/>
    <property type="match status" value="1"/>
</dbReference>
<dbReference type="InterPro" id="IPR020568">
    <property type="entry name" value="Ribosomal_Su5_D2-typ_SF"/>
</dbReference>
<dbReference type="InterPro" id="IPR000754">
    <property type="entry name" value="Ribosomal_uS9"/>
</dbReference>
<dbReference type="InterPro" id="IPR023035">
    <property type="entry name" value="Ribosomal_uS9_bac/plastid"/>
</dbReference>
<dbReference type="InterPro" id="IPR020574">
    <property type="entry name" value="Ribosomal_uS9_CS"/>
</dbReference>
<dbReference type="InterPro" id="IPR014721">
    <property type="entry name" value="Ribsml_uS5_D2-typ_fold_subgr"/>
</dbReference>
<dbReference type="NCBIfam" id="NF001099">
    <property type="entry name" value="PRK00132.1"/>
    <property type="match status" value="1"/>
</dbReference>
<dbReference type="PANTHER" id="PTHR21569">
    <property type="entry name" value="RIBOSOMAL PROTEIN S9"/>
    <property type="match status" value="1"/>
</dbReference>
<dbReference type="PANTHER" id="PTHR21569:SF1">
    <property type="entry name" value="SMALL RIBOSOMAL SUBUNIT PROTEIN US9M"/>
    <property type="match status" value="1"/>
</dbReference>
<dbReference type="Pfam" id="PF00380">
    <property type="entry name" value="Ribosomal_S9"/>
    <property type="match status" value="1"/>
</dbReference>
<dbReference type="SUPFAM" id="SSF54211">
    <property type="entry name" value="Ribosomal protein S5 domain 2-like"/>
    <property type="match status" value="1"/>
</dbReference>
<dbReference type="PROSITE" id="PS00360">
    <property type="entry name" value="RIBOSOMAL_S9"/>
    <property type="match status" value="1"/>
</dbReference>
<gene>
    <name evidence="1" type="primary">rpsI</name>
    <name type="ordered locus">SAV2217</name>
</gene>
<name>RS9_STAAM</name>